<organismHost>
    <name type="scientific">Homo sapiens</name>
    <name type="common">Human</name>
    <dbReference type="NCBI Taxonomy" id="9606"/>
</organismHost>
<name>RIR1_VZVO</name>
<gene>
    <name evidence="1" type="primary">RIR1</name>
    <name type="ORF">ORF19</name>
</gene>
<evidence type="ECO:0000255" key="1">
    <source>
        <dbReference type="HAMAP-Rule" id="MF_04026"/>
    </source>
</evidence>
<feature type="chain" id="PRO_0000385163" description="Ribonucleoside-diphosphate reductase large subunit">
    <location>
        <begin position="1"/>
        <end position="775"/>
    </location>
</feature>
<feature type="active site" description="Proton acceptor" evidence="1">
    <location>
        <position position="427"/>
    </location>
</feature>
<feature type="active site" description="Cysteine radical intermediate" evidence="1">
    <location>
        <position position="429"/>
    </location>
</feature>
<feature type="active site" description="Proton acceptor" evidence="1">
    <location>
        <position position="431"/>
    </location>
</feature>
<feature type="binding site" evidence="1">
    <location>
        <position position="200"/>
    </location>
    <ligand>
        <name>substrate</name>
    </ligand>
</feature>
<feature type="binding site" evidence="1">
    <location>
        <begin position="215"/>
        <end position="216"/>
    </location>
    <ligand>
        <name>substrate</name>
    </ligand>
</feature>
<feature type="binding site" evidence="1">
    <location>
        <position position="246"/>
    </location>
    <ligand>
        <name>substrate</name>
    </ligand>
</feature>
<feature type="binding site" evidence="1">
    <location>
        <begin position="427"/>
        <end position="431"/>
    </location>
    <ligand>
        <name>substrate</name>
    </ligand>
</feature>
<feature type="binding site" evidence="1">
    <location>
        <begin position="606"/>
        <end position="610"/>
    </location>
    <ligand>
        <name>substrate</name>
    </ligand>
</feature>
<feature type="site" description="Important for hydrogen atom transfer" evidence="1">
    <location>
        <position position="216"/>
    </location>
</feature>
<feature type="site" description="Important for hydrogen atom transfer" evidence="1">
    <location>
        <position position="444"/>
    </location>
</feature>
<feature type="site" description="Important for electron transfer" evidence="1">
    <location>
        <position position="750"/>
    </location>
</feature>
<feature type="site" description="Important for electron transfer" evidence="1">
    <location>
        <position position="751"/>
    </location>
</feature>
<feature type="site" description="Interacts with thioredoxin/glutaredoxin" evidence="1">
    <location>
        <position position="770"/>
    </location>
</feature>
<feature type="site" description="Interacts with thioredoxin/glutaredoxin" evidence="1">
    <location>
        <position position="773"/>
    </location>
</feature>
<feature type="disulfide bond" description="Redox-active" evidence="1">
    <location>
        <begin position="216"/>
        <end position="444"/>
    </location>
</feature>
<proteinExistence type="inferred from homology"/>
<dbReference type="EC" id="1.17.4.1" evidence="1"/>
<dbReference type="EMBL" id="AB097932">
    <property type="status" value="NOT_ANNOTATED_CDS"/>
    <property type="molecule type" value="Genomic_DNA"/>
</dbReference>
<dbReference type="EMBL" id="AB097933">
    <property type="status" value="NOT_ANNOTATED_CDS"/>
    <property type="molecule type" value="Genomic_DNA"/>
</dbReference>
<dbReference type="EMBL" id="DQ008354">
    <property type="protein sequence ID" value="AAY57685.1"/>
    <property type="molecule type" value="Genomic_DNA"/>
</dbReference>
<dbReference type="EMBL" id="DQ008355">
    <property type="protein sequence ID" value="AAY57756.1"/>
    <property type="molecule type" value="Genomic_DNA"/>
</dbReference>
<dbReference type="RefSeq" id="NP_040142.1">
    <property type="nucleotide sequence ID" value="NC_001348.1"/>
</dbReference>
<dbReference type="SMR" id="Q4JQV6"/>
<dbReference type="IntAct" id="Q4JQV6">
    <property type="interactions" value="20"/>
</dbReference>
<dbReference type="GeneID" id="1487716"/>
<dbReference type="KEGG" id="vg:1487716"/>
<dbReference type="Proteomes" id="UP000002603">
    <property type="component" value="Genome"/>
</dbReference>
<dbReference type="Proteomes" id="UP000008504">
    <property type="component" value="Genome"/>
</dbReference>
<dbReference type="Proteomes" id="UP000008505">
    <property type="component" value="Genome"/>
</dbReference>
<dbReference type="Proteomes" id="UP000008506">
    <property type="component" value="Genome"/>
</dbReference>
<dbReference type="GO" id="GO:0005524">
    <property type="term" value="F:ATP binding"/>
    <property type="evidence" value="ECO:0007669"/>
    <property type="project" value="UniProtKB-UniRule"/>
</dbReference>
<dbReference type="GO" id="GO:0004748">
    <property type="term" value="F:ribonucleoside-diphosphate reductase activity, thioredoxin disulfide as acceptor"/>
    <property type="evidence" value="ECO:0007669"/>
    <property type="project" value="UniProtKB-UniRule"/>
</dbReference>
<dbReference type="GO" id="GO:0009263">
    <property type="term" value="P:deoxyribonucleotide biosynthetic process"/>
    <property type="evidence" value="ECO:0007669"/>
    <property type="project" value="InterPro"/>
</dbReference>
<dbReference type="GO" id="GO:0006260">
    <property type="term" value="P:DNA replication"/>
    <property type="evidence" value="ECO:0007669"/>
    <property type="project" value="UniProtKB-KW"/>
</dbReference>
<dbReference type="GO" id="GO:0019046">
    <property type="term" value="P:release from viral latency"/>
    <property type="evidence" value="ECO:0007669"/>
    <property type="project" value="UniProtKB-KW"/>
</dbReference>
<dbReference type="Gene3D" id="3.20.70.20">
    <property type="match status" value="1"/>
</dbReference>
<dbReference type="HAMAP" id="MF_04026">
    <property type="entry name" value="HSV_RIR1"/>
    <property type="match status" value="1"/>
</dbReference>
<dbReference type="InterPro" id="IPR034717">
    <property type="entry name" value="HSV_RIR1"/>
</dbReference>
<dbReference type="InterPro" id="IPR013346">
    <property type="entry name" value="NrdE_NrdA_C"/>
</dbReference>
<dbReference type="InterPro" id="IPR000788">
    <property type="entry name" value="RNR_lg_C"/>
</dbReference>
<dbReference type="InterPro" id="IPR013509">
    <property type="entry name" value="RNR_lsu_N"/>
</dbReference>
<dbReference type="InterPro" id="IPR039718">
    <property type="entry name" value="Rrm1"/>
</dbReference>
<dbReference type="NCBIfam" id="TIGR02506">
    <property type="entry name" value="NrdE_NrdA"/>
    <property type="match status" value="1"/>
</dbReference>
<dbReference type="PANTHER" id="PTHR11573">
    <property type="entry name" value="RIBONUCLEOSIDE-DIPHOSPHATE REDUCTASE LARGE CHAIN"/>
    <property type="match status" value="1"/>
</dbReference>
<dbReference type="PANTHER" id="PTHR11573:SF6">
    <property type="entry name" value="RIBONUCLEOSIDE-DIPHOSPHATE REDUCTASE LARGE SUBUNIT"/>
    <property type="match status" value="1"/>
</dbReference>
<dbReference type="Pfam" id="PF02867">
    <property type="entry name" value="Ribonuc_red_lgC"/>
    <property type="match status" value="1"/>
</dbReference>
<dbReference type="Pfam" id="PF00317">
    <property type="entry name" value="Ribonuc_red_lgN"/>
    <property type="match status" value="1"/>
</dbReference>
<dbReference type="PRINTS" id="PR01183">
    <property type="entry name" value="RIBORDTASEM1"/>
</dbReference>
<dbReference type="SUPFAM" id="SSF51998">
    <property type="entry name" value="PFL-like glycyl radical enzymes"/>
    <property type="match status" value="1"/>
</dbReference>
<dbReference type="PROSITE" id="PS00089">
    <property type="entry name" value="RIBORED_LARGE"/>
    <property type="match status" value="1"/>
</dbReference>
<protein>
    <recommendedName>
        <fullName evidence="1">Ribonucleoside-diphosphate reductase large subunit</fullName>
        <shortName evidence="1">R1</shortName>
        <ecNumber evidence="1">1.17.4.1</ecNumber>
    </recommendedName>
    <alternativeName>
        <fullName evidence="1">Ribonucleotide reductase large subunit</fullName>
    </alternativeName>
</protein>
<reference key="1">
    <citation type="journal article" date="2002" name="J. Virol.">
        <title>Comparison of the complete DNA sequences of the Oka varicella vaccine and its parental virus.</title>
        <authorList>
            <person name="Gomi Y."/>
            <person name="Sunamachi H."/>
            <person name="Mori Y."/>
            <person name="Nagaike K."/>
            <person name="Takahashi M."/>
            <person name="Yamanishi K."/>
        </authorList>
    </citation>
    <scope>NUCLEOTIDE SEQUENCE [LARGE SCALE GENOMIC DNA]</scope>
    <source>
        <strain>Isolate Human/Japan/P-Oka/1970</strain>
        <strain>Oka varicella vaccine Biken (V-Oka-Biken)</strain>
    </source>
</reference>
<reference key="2">
    <citation type="journal article" date="2008" name="J. Virol.">
        <title>Complete DNA sequences of two oka strain varicella-zoster virus genomes.</title>
        <authorList>
            <person name="Tillieux S.L."/>
            <person name="Halsey W.S."/>
            <person name="Thomas E.S."/>
            <person name="Voycik J.J."/>
            <person name="Sathe G.M."/>
            <person name="Vassilev V."/>
        </authorList>
    </citation>
    <scope>NUCLEOTIDE SEQUENCE [LARGE SCALE GENOMIC DNA]</scope>
    <source>
        <strain>Oka varicella vaccine VarilRix (V-Oka-GSK)</strain>
        <strain>Oka varicella vaccine Varivax (V-Oka-Merck)</strain>
    </source>
</reference>
<reference key="3">
    <citation type="journal article" date="2009" name="Trends Biochem. Sci.">
        <title>Tinkering with a viral ribonucleotide reductase.</title>
        <authorList>
            <person name="Lembo D."/>
            <person name="Brune W."/>
        </authorList>
    </citation>
    <scope>REVIEW</scope>
</reference>
<organism>
    <name type="scientific">Varicella-zoster virus (strain Oka vaccine)</name>
    <name type="common">HHV-3</name>
    <name type="synonym">Human herpesvirus 3</name>
    <dbReference type="NCBI Taxonomy" id="341980"/>
    <lineage>
        <taxon>Viruses</taxon>
        <taxon>Duplodnaviria</taxon>
        <taxon>Heunggongvirae</taxon>
        <taxon>Peploviricota</taxon>
        <taxon>Herviviricetes</taxon>
        <taxon>Herpesvirales</taxon>
        <taxon>Orthoherpesviridae</taxon>
        <taxon>Alphaherpesvirinae</taxon>
        <taxon>Varicellovirus</taxon>
        <taxon>Varicellovirus humanalpha3</taxon>
        <taxon>Human herpesvirus 3</taxon>
    </lineage>
</organism>
<comment type="function">
    <text evidence="1">Ribonucleoside-diphosphate reductase holoenzyme provides the precursors necessary for viral DNA synthesis. Allows virus growth in non-dividing cells, as well as reactivation from latency in infected hosts. Catalyzes the biosynthesis of deoxyribonucleotides from the corresponding ribonucleotides.</text>
</comment>
<comment type="catalytic activity">
    <reaction evidence="1">
        <text>a 2'-deoxyribonucleoside 5'-diphosphate + [thioredoxin]-disulfide + H2O = a ribonucleoside 5'-diphosphate + [thioredoxin]-dithiol</text>
        <dbReference type="Rhea" id="RHEA:23252"/>
        <dbReference type="Rhea" id="RHEA-COMP:10698"/>
        <dbReference type="Rhea" id="RHEA-COMP:10700"/>
        <dbReference type="ChEBI" id="CHEBI:15377"/>
        <dbReference type="ChEBI" id="CHEBI:29950"/>
        <dbReference type="ChEBI" id="CHEBI:50058"/>
        <dbReference type="ChEBI" id="CHEBI:57930"/>
        <dbReference type="ChEBI" id="CHEBI:73316"/>
        <dbReference type="EC" id="1.17.4.1"/>
    </reaction>
</comment>
<comment type="subunit">
    <text evidence="1">Heterotetramer composed of a homodimer of the large subunit (R1) and a homodimer of the small subunit (R2). Larger multisubunit protein complex are also active, composed of (R1)n(R2)n.</text>
</comment>
<comment type="similarity">
    <text evidence="1">Belongs to the ribonucleoside diphosphate reductase large chain family.</text>
</comment>
<keyword id="KW-0067">ATP-binding</keyword>
<keyword id="KW-1015">Disulfide bond</keyword>
<keyword id="KW-0235">DNA replication</keyword>
<keyword id="KW-0244">Early protein</keyword>
<keyword id="KW-0547">Nucleotide-binding</keyword>
<keyword id="KW-0560">Oxidoreductase</keyword>
<keyword id="KW-1251">Viral latency</keyword>
<keyword id="KW-1272">Viral reactivation from latency</keyword>
<sequence>MEFKRIFNTVHDIINRLCQHGYKEYIIPPESTTPVELMEYISTIVSKLKAVTRQDERVYRCCGELIHCRINLRSVSMETWLTSPILCLTPRVRQAIEGRRDEIRRAILEPFLKDQYPALATLGLQSALKYEDFYLTKLEEGKLESLCQFFLRLAATVTTEIVNLPKIATLIPGINDGYTWTDVCRVFFTALACQKIVPATPVMMFLGRETGATASCYLMDPESITVGRAVRAITGDVGTVLQSRGGVGISLQSLNLIPTENQTKGLLAVLKLLDCMVMAINSDCERPTGVCVYIEPWHVDLQTVLATRGMLVRDEIFRCDNIFCCLWTPDLFFERYLSYLKGASNVQWTLFDNRADILRTLHGEAFTSTYLRLEREGLGVSSVPIQDIAFTIIRSAAVTGSPFLMFKDACNRNYHMNTQGNAITGSNLCTEIVQKADAHQHGVCNLASINLTTCLSKGPVSFNLNDLQLTARTTVIFLNGVLAAGNFPCKKSCKGVKNNRSLGIGIQGLHTTCLRLGFDLTSQPARRLNVQIAELMLYETMKTSMEMCKIGGLAPFKGFTESKYAKGWLHQDGFSTISYLDLPWCTLRDDICAYGLYNSQFLALMPTVSSAQVTECSEGFSPIYNNMFSKVTTSGELLRPNLDLMDELRDMYSCEEKRLEVINILEKNQWSVIRSFGCLSNSHPLLKYKTAFEYEQEDLVDMCAERAPFIDQSQSMTLFIEERPDGTIPASKIMNLLIRAYKAGLKTGMYYCKIRKATNSGLFAGGELTCTSCAL</sequence>
<accession>Q4JQV6</accession>